<feature type="chain" id="PRO_0000330458" description="Putative GATA zinc finger domain-containing protein 25">
    <location>
        <begin position="1"/>
        <end position="298"/>
    </location>
</feature>
<feature type="zinc finger region" description="GATA-type; degenerate">
    <location>
        <begin position="229"/>
        <end position="256"/>
    </location>
</feature>
<feature type="region of interest" description="Disordered" evidence="2">
    <location>
        <begin position="148"/>
        <end position="227"/>
    </location>
</feature>
<feature type="coiled-coil region" evidence="1">
    <location>
        <begin position="4"/>
        <end position="37"/>
    </location>
</feature>
<feature type="compositionally biased region" description="Acidic residues" evidence="2">
    <location>
        <begin position="183"/>
        <end position="202"/>
    </location>
</feature>
<feature type="compositionally biased region" description="Basic and acidic residues" evidence="2">
    <location>
        <begin position="203"/>
        <end position="212"/>
    </location>
</feature>
<feature type="compositionally biased region" description="Basic residues" evidence="2">
    <location>
        <begin position="214"/>
        <end position="223"/>
    </location>
</feature>
<dbReference type="EMBL" id="AAFI02000030">
    <property type="protein sequence ID" value="EAL67768.1"/>
    <property type="molecule type" value="Genomic_DNA"/>
</dbReference>
<dbReference type="RefSeq" id="XP_641746.1">
    <property type="nucleotide sequence ID" value="XM_636654.1"/>
</dbReference>
<dbReference type="SMR" id="Q54X31"/>
<dbReference type="PaxDb" id="44689-DDB0233428"/>
<dbReference type="EnsemblProtists" id="EAL67768">
    <property type="protein sequence ID" value="EAL67768"/>
    <property type="gene ID" value="DDB_G0279239"/>
</dbReference>
<dbReference type="GeneID" id="8621944"/>
<dbReference type="KEGG" id="ddi:DDB_G0279239"/>
<dbReference type="dictyBase" id="DDB_G0279239">
    <property type="gene designation" value="gtaY"/>
</dbReference>
<dbReference type="VEuPathDB" id="AmoebaDB:DDB_G0279239"/>
<dbReference type="HOGENOM" id="CLU_935161_0_0_1"/>
<dbReference type="InParanoid" id="Q54X31"/>
<dbReference type="PRO" id="PR:Q54X31"/>
<dbReference type="Proteomes" id="UP000002195">
    <property type="component" value="Chromosome 3"/>
</dbReference>
<dbReference type="GO" id="GO:0043565">
    <property type="term" value="F:sequence-specific DNA binding"/>
    <property type="evidence" value="ECO:0007669"/>
    <property type="project" value="InterPro"/>
</dbReference>
<dbReference type="GO" id="GO:0008270">
    <property type="term" value="F:zinc ion binding"/>
    <property type="evidence" value="ECO:0007669"/>
    <property type="project" value="UniProtKB-KW"/>
</dbReference>
<dbReference type="GO" id="GO:0006355">
    <property type="term" value="P:regulation of DNA-templated transcription"/>
    <property type="evidence" value="ECO:0007669"/>
    <property type="project" value="InterPro"/>
</dbReference>
<dbReference type="Gene3D" id="3.30.50.10">
    <property type="entry name" value="Erythroid Transcription Factor GATA-1, subunit A"/>
    <property type="match status" value="1"/>
</dbReference>
<dbReference type="InterPro" id="IPR000679">
    <property type="entry name" value="Znf_GATA"/>
</dbReference>
<dbReference type="InterPro" id="IPR013088">
    <property type="entry name" value="Znf_NHR/GATA"/>
</dbReference>
<dbReference type="SMART" id="SM00401">
    <property type="entry name" value="ZnF_GATA"/>
    <property type="match status" value="1"/>
</dbReference>
<dbReference type="SUPFAM" id="SSF57716">
    <property type="entry name" value="Glucocorticoid receptor-like (DNA-binding domain)"/>
    <property type="match status" value="1"/>
</dbReference>
<sequence length="298" mass="35602">MNFDNKNKNDNYQESIQRIVNQRNNLLKEIENKINQQFGNGNYETLIKSIELIYEIEEKIKRIKELNSLQCDLLEYINPTNSMVPTSPFSSPNFPNSNIEIIDQKQHHQQKLQQQQQQQQQQQQQQQQQQQQQQQQQQQQKQQQKQQQQQLQQSHTKQSPKKQGHNSKQQFLTSLEKHKDQKEENEENEENEENEENEENEENKEKDVEVAKSNKPKRGRPSKPKPEYCFRYGTRSCPYWRKNVIKGELVDVCNACGLHLMKKEKKDLMEKQKNSIKNLLNNDEIITNYDDLGFVLYN</sequence>
<evidence type="ECO:0000255" key="1"/>
<evidence type="ECO:0000256" key="2">
    <source>
        <dbReference type="SAM" id="MobiDB-lite"/>
    </source>
</evidence>
<proteinExistence type="predicted"/>
<keyword id="KW-0175">Coiled coil</keyword>
<keyword id="KW-0479">Metal-binding</keyword>
<keyword id="KW-1185">Reference proteome</keyword>
<keyword id="KW-0862">Zinc</keyword>
<keyword id="KW-0863">Zinc-finger</keyword>
<protein>
    <recommendedName>
        <fullName>Putative GATA zinc finger domain-containing protein 25</fullName>
    </recommendedName>
</protein>
<gene>
    <name type="primary">gtaY</name>
    <name type="ORF">DDB_G0279239</name>
</gene>
<organism>
    <name type="scientific">Dictyostelium discoideum</name>
    <name type="common">Social amoeba</name>
    <dbReference type="NCBI Taxonomy" id="44689"/>
    <lineage>
        <taxon>Eukaryota</taxon>
        <taxon>Amoebozoa</taxon>
        <taxon>Evosea</taxon>
        <taxon>Eumycetozoa</taxon>
        <taxon>Dictyostelia</taxon>
        <taxon>Dictyosteliales</taxon>
        <taxon>Dictyosteliaceae</taxon>
        <taxon>Dictyostelium</taxon>
    </lineage>
</organism>
<name>GTAY_DICDI</name>
<accession>Q54X31</accession>
<reference key="1">
    <citation type="journal article" date="2005" name="Nature">
        <title>The genome of the social amoeba Dictyostelium discoideum.</title>
        <authorList>
            <person name="Eichinger L."/>
            <person name="Pachebat J.A."/>
            <person name="Gloeckner G."/>
            <person name="Rajandream M.A."/>
            <person name="Sucgang R."/>
            <person name="Berriman M."/>
            <person name="Song J."/>
            <person name="Olsen R."/>
            <person name="Szafranski K."/>
            <person name="Xu Q."/>
            <person name="Tunggal B."/>
            <person name="Kummerfeld S."/>
            <person name="Madera M."/>
            <person name="Konfortov B.A."/>
            <person name="Rivero F."/>
            <person name="Bankier A.T."/>
            <person name="Lehmann R."/>
            <person name="Hamlin N."/>
            <person name="Davies R."/>
            <person name="Gaudet P."/>
            <person name="Fey P."/>
            <person name="Pilcher K."/>
            <person name="Chen G."/>
            <person name="Saunders D."/>
            <person name="Sodergren E.J."/>
            <person name="Davis P."/>
            <person name="Kerhornou A."/>
            <person name="Nie X."/>
            <person name="Hall N."/>
            <person name="Anjard C."/>
            <person name="Hemphill L."/>
            <person name="Bason N."/>
            <person name="Farbrother P."/>
            <person name="Desany B."/>
            <person name="Just E."/>
            <person name="Morio T."/>
            <person name="Rost R."/>
            <person name="Churcher C.M."/>
            <person name="Cooper J."/>
            <person name="Haydock S."/>
            <person name="van Driessche N."/>
            <person name="Cronin A."/>
            <person name="Goodhead I."/>
            <person name="Muzny D.M."/>
            <person name="Mourier T."/>
            <person name="Pain A."/>
            <person name="Lu M."/>
            <person name="Harper D."/>
            <person name="Lindsay R."/>
            <person name="Hauser H."/>
            <person name="James K.D."/>
            <person name="Quiles M."/>
            <person name="Madan Babu M."/>
            <person name="Saito T."/>
            <person name="Buchrieser C."/>
            <person name="Wardroper A."/>
            <person name="Felder M."/>
            <person name="Thangavelu M."/>
            <person name="Johnson D."/>
            <person name="Knights A."/>
            <person name="Loulseged H."/>
            <person name="Mungall K.L."/>
            <person name="Oliver K."/>
            <person name="Price C."/>
            <person name="Quail M.A."/>
            <person name="Urushihara H."/>
            <person name="Hernandez J."/>
            <person name="Rabbinowitsch E."/>
            <person name="Steffen D."/>
            <person name="Sanders M."/>
            <person name="Ma J."/>
            <person name="Kohara Y."/>
            <person name="Sharp S."/>
            <person name="Simmonds M.N."/>
            <person name="Spiegler S."/>
            <person name="Tivey A."/>
            <person name="Sugano S."/>
            <person name="White B."/>
            <person name="Walker D."/>
            <person name="Woodward J.R."/>
            <person name="Winckler T."/>
            <person name="Tanaka Y."/>
            <person name="Shaulsky G."/>
            <person name="Schleicher M."/>
            <person name="Weinstock G.M."/>
            <person name="Rosenthal A."/>
            <person name="Cox E.C."/>
            <person name="Chisholm R.L."/>
            <person name="Gibbs R.A."/>
            <person name="Loomis W.F."/>
            <person name="Platzer M."/>
            <person name="Kay R.R."/>
            <person name="Williams J.G."/>
            <person name="Dear P.H."/>
            <person name="Noegel A.A."/>
            <person name="Barrell B.G."/>
            <person name="Kuspa A."/>
        </authorList>
    </citation>
    <scope>NUCLEOTIDE SEQUENCE [LARGE SCALE GENOMIC DNA]</scope>
    <source>
        <strain>AX4</strain>
    </source>
</reference>